<dbReference type="EMBL" id="M11854">
    <property type="protein sequence ID" value="AAA45836.1"/>
    <property type="molecule type" value="Genomic_DNA"/>
</dbReference>
<dbReference type="EMBL" id="Z86099">
    <property type="protein sequence ID" value="CAB06771.1"/>
    <property type="molecule type" value="Genomic_DNA"/>
</dbReference>
<dbReference type="RefSeq" id="YP_009137162.1">
    <property type="nucleotide sequence ID" value="NC_001798.2"/>
</dbReference>
<dbReference type="DNASU" id="24271454"/>
<dbReference type="GeneID" id="24271454"/>
<dbReference type="KEGG" id="vg:24271454"/>
<dbReference type="Proteomes" id="UP000001874">
    <property type="component" value="Segment"/>
</dbReference>
<dbReference type="GO" id="GO:0044178">
    <property type="term" value="C:host cell Golgi membrane"/>
    <property type="evidence" value="ECO:0007669"/>
    <property type="project" value="UniProtKB-SubCell"/>
</dbReference>
<dbReference type="GO" id="GO:0020002">
    <property type="term" value="C:host cell plasma membrane"/>
    <property type="evidence" value="ECO:0007669"/>
    <property type="project" value="UniProtKB-SubCell"/>
</dbReference>
<dbReference type="GO" id="GO:0016020">
    <property type="term" value="C:membrane"/>
    <property type="evidence" value="ECO:0007669"/>
    <property type="project" value="UniProtKB-KW"/>
</dbReference>
<dbReference type="GO" id="GO:0019033">
    <property type="term" value="C:viral tegument"/>
    <property type="evidence" value="ECO:0007669"/>
    <property type="project" value="UniProtKB-SubCell"/>
</dbReference>
<dbReference type="GO" id="GO:0055036">
    <property type="term" value="C:virion membrane"/>
    <property type="evidence" value="ECO:0007669"/>
    <property type="project" value="UniProtKB-SubCell"/>
</dbReference>
<dbReference type="GO" id="GO:0009653">
    <property type="term" value="P:anatomical structure morphogenesis"/>
    <property type="evidence" value="ECO:0007669"/>
    <property type="project" value="UniProtKB-UniRule"/>
</dbReference>
<dbReference type="GO" id="GO:0046760">
    <property type="term" value="P:viral budding from Golgi membrane"/>
    <property type="evidence" value="ECO:0007669"/>
    <property type="project" value="UniProtKB-UniRule"/>
</dbReference>
<dbReference type="HAMAP" id="MF_04040">
    <property type="entry name" value="HSV_CEP3_alphahv"/>
    <property type="match status" value="1"/>
</dbReference>
<dbReference type="InterPro" id="IPR024351">
    <property type="entry name" value="Tegument_UL11_Herpesvir"/>
</dbReference>
<dbReference type="InterPro" id="IPR016395">
    <property type="entry name" value="UL11_simplexvirus"/>
</dbReference>
<dbReference type="Pfam" id="PF11094">
    <property type="entry name" value="UL11"/>
    <property type="match status" value="1"/>
</dbReference>
<dbReference type="PIRSF" id="PIRSF003496">
    <property type="entry name" value="Myristoylat_tegument_UL11"/>
    <property type="match status" value="1"/>
</dbReference>
<accession>P13294</accession>
<accession>P89434</accession>
<gene>
    <name type="ORF">UL11</name>
</gene>
<name>CEP3_HHV2H</name>
<evidence type="ECO:0000255" key="1">
    <source>
        <dbReference type="HAMAP-Rule" id="MF_04040"/>
    </source>
</evidence>
<evidence type="ECO:0000256" key="2">
    <source>
        <dbReference type="SAM" id="MobiDB-lite"/>
    </source>
</evidence>
<evidence type="ECO:0000269" key="3">
    <source>
    </source>
</evidence>
<evidence type="ECO:0000269" key="4">
    <source>
    </source>
</evidence>
<evidence type="ECO:0000305" key="5"/>
<evidence type="ECO:0000305" key="6">
    <source>
    </source>
</evidence>
<proteinExistence type="evidence at protein level"/>
<organismHost>
    <name type="scientific">Homo sapiens</name>
    <name type="common">Human</name>
    <dbReference type="NCBI Taxonomy" id="9606"/>
</organismHost>
<sequence>MGLAFSGARPCCCRHNVITTDGGEVVSLTAHEFDVVDIESEEEGNFYVPPDVRVVTRAPGPQYRRPSDPPSRHTRRRDPDVARPPATLTPPLSDSE</sequence>
<reference key="1">
    <citation type="journal article" date="1986" name="J. Virol.">
        <title>Characterization of the genes encoding herpes simplex virus type 1 and type 2 alkaline exonucleases and overlapping proteins.</title>
        <authorList>
            <person name="Draper K.G."/>
            <person name="Devi-Rao G."/>
            <person name="Costa R.H."/>
            <person name="Blair E.D."/>
            <person name="Thompson R.L."/>
            <person name="Wagner E.K."/>
        </authorList>
    </citation>
    <scope>NUCLEOTIDE SEQUENCE [GENOMIC DNA]</scope>
</reference>
<reference key="2">
    <citation type="journal article" date="1998" name="J. Virol.">
        <title>The genome sequence of herpes simplex virus type 2.</title>
        <authorList>
            <person name="Dolan A."/>
            <person name="Jamieson F.E."/>
            <person name="Cunningham C."/>
            <person name="Barnett B.C."/>
            <person name="McGeoch D.J."/>
        </authorList>
    </citation>
    <scope>NUCLEOTIDE SEQUENCE [LARGE SCALE GENOMIC DNA]</scope>
</reference>
<reference key="3">
    <citation type="journal article" date="2006" name="Virus Genes">
        <title>Association of two membrane proteins encoded by herpes simplex virus type 2, UL11 and UL56.</title>
        <authorList>
            <person name="Koshizuka T."/>
            <person name="Kawaguchi Y."/>
            <person name="Goshima F."/>
            <person name="Mori I."/>
            <person name="Nishiyama Y."/>
        </authorList>
    </citation>
    <scope>INTERACTION WITH UL56</scope>
    <scope>SUBCELLULAR LOCATION</scope>
    <scope>MUTAGENESIS OF 11-CYS--CYS-13</scope>
    <scope>PALMITOYLATION</scope>
    <scope>MUTAGENESIS OF GLY-2</scope>
    <source>
        <strain>186</strain>
    </source>
</reference>
<reference key="4">
    <citation type="journal article" date="2007" name="Virus Genes">
        <title>Herpes simplex virus protein UL11 but not UL51 is associated with lipid rafts.</title>
        <authorList>
            <person name="Koshizuka T."/>
            <person name="Kawaguchi Y."/>
            <person name="Nozawa N."/>
            <person name="Mori I."/>
            <person name="Nishiyama Y."/>
        </authorList>
    </citation>
    <scope>SUBCELLULAR LOCATION</scope>
</reference>
<feature type="initiator methionine" description="Removed; by host" evidence="1">
    <location>
        <position position="1"/>
    </location>
</feature>
<feature type="chain" id="PRO_0000115926" description="Cytoplasmic envelopment protein 3" evidence="1">
    <location>
        <begin position="2"/>
        <end position="96"/>
    </location>
</feature>
<feature type="region of interest" description="Asp/Glu-rich (acidic)" evidence="1">
    <location>
        <begin position="37"/>
        <end position="43"/>
    </location>
</feature>
<feature type="region of interest" description="Disordered" evidence="2">
    <location>
        <begin position="50"/>
        <end position="96"/>
    </location>
</feature>
<feature type="compositionally biased region" description="Basic and acidic residues" evidence="2">
    <location>
        <begin position="65"/>
        <end position="81"/>
    </location>
</feature>
<feature type="modified residue" description="Phosphoserine" evidence="1">
    <location>
        <position position="40"/>
    </location>
</feature>
<feature type="lipid moiety-binding region" description="N-myristoyl glycine; by host" evidence="1">
    <location>
        <position position="2"/>
    </location>
</feature>
<feature type="mutagenesis site" description="Complete loss of myristoylation and almost complete loss of interaction with UL56." evidence="3">
    <original>G</original>
    <variation>A</variation>
    <location>
        <position position="2"/>
    </location>
</feature>
<feature type="mutagenesis site" description="Complete loss of palmitoylation and almost complete loss of interaction with UL56." evidence="3">
    <original>CCC</original>
    <variation>AAA</variation>
    <location>
        <begin position="11"/>
        <end position="13"/>
    </location>
</feature>
<feature type="mutagenesis site" description="Complete loss of palmitoylation and almost complete loss of interaction with UL56." evidence="3">
    <original>CCC</original>
    <variation>SSS</variation>
    <location>
        <begin position="11"/>
        <end position="13"/>
    </location>
</feature>
<feature type="sequence conflict" description="In Ref. 2; CAB06771." evidence="5" ref="2">
    <original>P</original>
    <variation>A</variation>
    <location>
        <position position="66"/>
    </location>
</feature>
<comment type="function">
    <text evidence="1">Plays an important role in the cytoplasmic envelopment of tegument proteins and capsids during the assembly and egress processes. Also participates in viral entry at the fusion step probably by regulating the core fusion machinery.</text>
</comment>
<comment type="subunit">
    <text evidence="1 3">Interacts with cytoplasmic envelopment protein 2; this interaction is essential for the proper localization of each protein to the assembly complex and thus for the production of infectious virus (By similarity). Interacts with gE (via C-terminus). Interacts with gD (via C-terminus). Interacts with UL56.</text>
</comment>
<comment type="subcellular location">
    <subcellularLocation>
        <location evidence="1">Virion tegument</location>
    </subcellularLocation>
    <subcellularLocation>
        <location evidence="1">Virion membrane</location>
        <topology evidence="1">Lipid-anchor</topology>
    </subcellularLocation>
    <subcellularLocation>
        <location evidence="1 4">Host cell membrane</location>
        <topology evidence="1">Lipid-anchor</topology>
        <orientation evidence="1 4">Cytoplasmic side</orientation>
    </subcellularLocation>
    <subcellularLocation>
        <location evidence="1 3">Host Golgi apparatus membrane</location>
        <topology evidence="1">Lipid-anchor</topology>
        <orientation evidence="1 4">Cytoplasmic side</orientation>
    </subcellularLocation>
    <text evidence="1">Virion membrane-associated tegument protein. Associates with host membrane lipids rafts. During virion morphogenesis, this protein probably accumulates in the endosomes and trans-Golgi where secondary envelopment occurs. It is probably transported to the cell surface from where it is endocytosed and directed to the trans-Golgi network (TGN).</text>
</comment>
<comment type="PTM">
    <text evidence="1 6">Myristoylation and palmitoylation (probably on one or more of the nearby cysteines at the N-terminus) enable membrane-binding and Golgi apparatus-specific targeting and are essential for efficient packaging.</text>
</comment>
<comment type="PTM">
    <text evidence="1">Phosphorylated. Phosphorylation does not seem to be required for recycling to the host Golgi apparatus. Packaging is selective for underphosphorylated forms.</text>
</comment>
<comment type="similarity">
    <text evidence="1">Belongs to the herpesviridae cytoplasmic envelopment protein 3 family.</text>
</comment>
<protein>
    <recommendedName>
        <fullName evidence="1">Cytoplasmic envelopment protein 3</fullName>
    </recommendedName>
</protein>
<keyword id="KW-1032">Host cell membrane</keyword>
<keyword id="KW-1040">Host Golgi apparatus</keyword>
<keyword id="KW-1043">Host membrane</keyword>
<keyword id="KW-0449">Lipoprotein</keyword>
<keyword id="KW-0472">Membrane</keyword>
<keyword id="KW-0519">Myristate</keyword>
<keyword id="KW-0564">Palmitate</keyword>
<keyword id="KW-0597">Phosphoprotein</keyword>
<keyword id="KW-1185">Reference proteome</keyword>
<keyword id="KW-0946">Virion</keyword>
<keyword id="KW-0920">Virion tegument</keyword>
<organism>
    <name type="scientific">Human herpesvirus 2 (strain HG52)</name>
    <name type="common">HHV-2</name>
    <name type="synonym">Human herpes simplex virus 2</name>
    <dbReference type="NCBI Taxonomy" id="10315"/>
    <lineage>
        <taxon>Viruses</taxon>
        <taxon>Duplodnaviria</taxon>
        <taxon>Heunggongvirae</taxon>
        <taxon>Peploviricota</taxon>
        <taxon>Herviviricetes</taxon>
        <taxon>Herpesvirales</taxon>
        <taxon>Orthoherpesviridae</taxon>
        <taxon>Alphaherpesvirinae</taxon>
        <taxon>Simplexvirus</taxon>
        <taxon>Simplexvirus humanalpha2</taxon>
        <taxon>Human herpesvirus 2</taxon>
    </lineage>
</organism>